<feature type="peptide" id="PRO_0000441362" description="Cyclotide mobo-B" evidence="2">
    <location>
        <begin position="1"/>
        <end position="29"/>
    </location>
</feature>
<feature type="disulfide bond" evidence="1">
    <location>
        <begin position="5"/>
        <end position="19"/>
    </location>
</feature>
<feature type="disulfide bond" evidence="1">
    <location>
        <begin position="9"/>
        <end position="21"/>
    </location>
</feature>
<feature type="disulfide bond" evidence="1">
    <location>
        <begin position="14"/>
        <end position="26"/>
    </location>
</feature>
<feature type="cross-link" description="Cyclopeptide (Gly-Asn)" evidence="3">
    <location>
        <begin position="1"/>
        <end position="29"/>
    </location>
</feature>
<accession>C0HKJ8</accession>
<protein>
    <recommendedName>
        <fullName evidence="3">Cyclotide mobo-B</fullName>
    </recommendedName>
</protein>
<evidence type="ECO:0000255" key="1">
    <source>
        <dbReference type="PROSITE-ProRule" id="PRU00395"/>
    </source>
</evidence>
<evidence type="ECO:0000269" key="2">
    <source>
    </source>
</evidence>
<evidence type="ECO:0000303" key="3">
    <source>
    </source>
</evidence>
<evidence type="ECO:0000305" key="4"/>
<name>CYMBB_MELOB</name>
<organism evidence="3">
    <name type="scientific">Melicytus obovatus</name>
    <name type="common">Hymenanthera obovata</name>
    <dbReference type="NCBI Taxonomy" id="450841"/>
    <lineage>
        <taxon>Eukaryota</taxon>
        <taxon>Viridiplantae</taxon>
        <taxon>Streptophyta</taxon>
        <taxon>Embryophyta</taxon>
        <taxon>Tracheophyta</taxon>
        <taxon>Spermatophyta</taxon>
        <taxon>Magnoliopsida</taxon>
        <taxon>eudicotyledons</taxon>
        <taxon>Gunneridae</taxon>
        <taxon>Pentapetalae</taxon>
        <taxon>rosids</taxon>
        <taxon>fabids</taxon>
        <taxon>Malpighiales</taxon>
        <taxon>Violaceae</taxon>
        <taxon>Melicytus</taxon>
    </lineage>
</organism>
<keyword id="KW-0903">Direct protein sequencing</keyword>
<keyword id="KW-1015">Disulfide bond</keyword>
<keyword id="KW-0611">Plant defense</keyword>
<reference evidence="4" key="1">
    <citation type="journal article" date="2017" name="J. Nat. Prod.">
        <title>Understanding the Diversity and Distribution of Cyclotides from Plants of Varied Genetic Origin.</title>
        <authorList>
            <person name="Ravipati A.S."/>
            <person name="Poth A.G."/>
            <person name="Troeira Henriques S."/>
            <person name="Bhandari M."/>
            <person name="Huang Y.H."/>
            <person name="Nino J."/>
            <person name="Colgrave M.L."/>
            <person name="Craik D.J."/>
        </authorList>
    </citation>
    <scope>PROTEIN SEQUENCE</scope>
</reference>
<comment type="function">
    <text evidence="1">Probably participates in a plant defense mechanism.</text>
</comment>
<comment type="domain">
    <text evidence="4">The presence of a 'disulfide through disulfide knot' structurally defines this protein as a knottin.</text>
</comment>
<comment type="PTM">
    <text evidence="1">This is a cyclic peptide.</text>
</comment>
<comment type="similarity">
    <text evidence="1">Belongs to the cyclotide family.</text>
</comment>
<comment type="caution">
    <text evidence="1">This peptide is cyclic. The start position was chosen by similarity to Oak1 (kalata B1) for which the DNA sequence is known.</text>
</comment>
<sequence>GKPICGETCAKGKCYTPKCTCNWPICYKN</sequence>
<proteinExistence type="evidence at protein level"/>
<dbReference type="SMR" id="C0HKJ8"/>
<dbReference type="GO" id="GO:0006952">
    <property type="term" value="P:defense response"/>
    <property type="evidence" value="ECO:0007669"/>
    <property type="project" value="UniProtKB-KW"/>
</dbReference>
<dbReference type="InterPro" id="IPR005535">
    <property type="entry name" value="Cyclotide"/>
</dbReference>
<dbReference type="InterPro" id="IPR036146">
    <property type="entry name" value="Cyclotide_sf"/>
</dbReference>
<dbReference type="Pfam" id="PF03784">
    <property type="entry name" value="Cyclotide"/>
    <property type="match status" value="1"/>
</dbReference>
<dbReference type="PIRSF" id="PIRSF037891">
    <property type="entry name" value="Cycloviolacin"/>
    <property type="match status" value="1"/>
</dbReference>
<dbReference type="SUPFAM" id="SSF57038">
    <property type="entry name" value="Cyclotides"/>
    <property type="match status" value="1"/>
</dbReference>
<dbReference type="PROSITE" id="PS51052">
    <property type="entry name" value="CYCLOTIDE"/>
    <property type="match status" value="1"/>
</dbReference>